<proteinExistence type="inferred from homology"/>
<accession>P0DN35</accession>
<comment type="function">
    <text evidence="1">Accessory subunit of the mitochondrial membrane respiratory chain NADH dehydrogenase (Complex I) that is believed not to be involved in catalysis. Complex I functions in the transfer of electrons from NADH to the respiratory chain. The immediate electron acceptor for the enzyme is believed to be ubiquinone.</text>
</comment>
<comment type="subunit">
    <text evidence="1">Complex I is composed of 45 different subunits.</text>
</comment>
<comment type="subcellular location">
    <subcellularLocation>
        <location evidence="1">Mitochondrion inner membrane</location>
        <topology evidence="2">Single-pass membrane protein</topology>
        <orientation evidence="1">Matrix side</orientation>
    </subcellularLocation>
</comment>
<comment type="similarity">
    <text evidence="3">Belongs to the complex I NDUFB1 subunit family.</text>
</comment>
<protein>
    <recommendedName>
        <fullName>NADH dehydrogenase [ubiquinone] 1 beta subcomplex subunit 1</fullName>
    </recommendedName>
    <alternativeName>
        <fullName>Complex I-MNLL</fullName>
        <shortName>CI-MNLL</shortName>
    </alternativeName>
    <alternativeName>
        <fullName>NADH-ubiquinone oxidoreductase MNLL subunit</fullName>
    </alternativeName>
</protein>
<gene>
    <name type="primary">Ndufb1</name>
</gene>
<sequence length="57" mass="6998">MTLLQLVREHWVHILVPMGFAFGYYLDRKDDEKLTAFRNKSMLFQRELRPNEEVTWK</sequence>
<feature type="chain" id="PRO_0000434811" description="NADH dehydrogenase [ubiquinone] 1 beta subcomplex subunit 1">
    <location>
        <begin position="1"/>
        <end position="57"/>
    </location>
</feature>
<feature type="transmembrane region" description="Helical" evidence="2">
    <location>
        <begin position="10"/>
        <end position="26"/>
    </location>
</feature>
<keyword id="KW-0249">Electron transport</keyword>
<keyword id="KW-0472">Membrane</keyword>
<keyword id="KW-0496">Mitochondrion</keyword>
<keyword id="KW-0999">Mitochondrion inner membrane</keyword>
<keyword id="KW-1185">Reference proteome</keyword>
<keyword id="KW-0679">Respiratory chain</keyword>
<keyword id="KW-0812">Transmembrane</keyword>
<keyword id="KW-1133">Transmembrane helix</keyword>
<keyword id="KW-0813">Transport</keyword>
<evidence type="ECO:0000250" key="1">
    <source>
        <dbReference type="UniProtKB" id="O75438"/>
    </source>
</evidence>
<evidence type="ECO:0000255" key="2"/>
<evidence type="ECO:0000305" key="3"/>
<organism>
    <name type="scientific">Rattus norvegicus</name>
    <name type="common">Rat</name>
    <dbReference type="NCBI Taxonomy" id="10116"/>
    <lineage>
        <taxon>Eukaryota</taxon>
        <taxon>Metazoa</taxon>
        <taxon>Chordata</taxon>
        <taxon>Craniata</taxon>
        <taxon>Vertebrata</taxon>
        <taxon>Euteleostomi</taxon>
        <taxon>Mammalia</taxon>
        <taxon>Eutheria</taxon>
        <taxon>Euarchontoglires</taxon>
        <taxon>Glires</taxon>
        <taxon>Rodentia</taxon>
        <taxon>Myomorpha</taxon>
        <taxon>Muroidea</taxon>
        <taxon>Muridae</taxon>
        <taxon>Murinae</taxon>
        <taxon>Rattus</taxon>
    </lineage>
</organism>
<name>NDUB1_RAT</name>
<reference key="1">
    <citation type="journal article" date="2004" name="Nature">
        <title>Genome sequence of the Brown Norway rat yields insights into mammalian evolution.</title>
        <authorList>
            <person name="Gibbs R.A."/>
            <person name="Weinstock G.M."/>
            <person name="Metzker M.L."/>
            <person name="Muzny D.M."/>
            <person name="Sodergren E.J."/>
            <person name="Scherer S."/>
            <person name="Scott G."/>
            <person name="Steffen D."/>
            <person name="Worley K.C."/>
            <person name="Burch P.E."/>
            <person name="Okwuonu G."/>
            <person name="Hines S."/>
            <person name="Lewis L."/>
            <person name="Deramo C."/>
            <person name="Delgado O."/>
            <person name="Dugan-Rocha S."/>
            <person name="Miner G."/>
            <person name="Morgan M."/>
            <person name="Hawes A."/>
            <person name="Gill R."/>
            <person name="Holt R.A."/>
            <person name="Adams M.D."/>
            <person name="Amanatides P.G."/>
            <person name="Baden-Tillson H."/>
            <person name="Barnstead M."/>
            <person name="Chin S."/>
            <person name="Evans C.A."/>
            <person name="Ferriera S."/>
            <person name="Fosler C."/>
            <person name="Glodek A."/>
            <person name="Gu Z."/>
            <person name="Jennings D."/>
            <person name="Kraft C.L."/>
            <person name="Nguyen T."/>
            <person name="Pfannkoch C.M."/>
            <person name="Sitter C."/>
            <person name="Sutton G.G."/>
            <person name="Venter J.C."/>
            <person name="Woodage T."/>
            <person name="Smith D."/>
            <person name="Lee H.-M."/>
            <person name="Gustafson E."/>
            <person name="Cahill P."/>
            <person name="Kana A."/>
            <person name="Doucette-Stamm L."/>
            <person name="Weinstock K."/>
            <person name="Fechtel K."/>
            <person name="Weiss R.B."/>
            <person name="Dunn D.M."/>
            <person name="Green E.D."/>
            <person name="Blakesley R.W."/>
            <person name="Bouffard G.G."/>
            <person name="De Jong P.J."/>
            <person name="Osoegawa K."/>
            <person name="Zhu B."/>
            <person name="Marra M."/>
            <person name="Schein J."/>
            <person name="Bosdet I."/>
            <person name="Fjell C."/>
            <person name="Jones S."/>
            <person name="Krzywinski M."/>
            <person name="Mathewson C."/>
            <person name="Siddiqui A."/>
            <person name="Wye N."/>
            <person name="McPherson J."/>
            <person name="Zhao S."/>
            <person name="Fraser C.M."/>
            <person name="Shetty J."/>
            <person name="Shatsman S."/>
            <person name="Geer K."/>
            <person name="Chen Y."/>
            <person name="Abramzon S."/>
            <person name="Nierman W.C."/>
            <person name="Havlak P.H."/>
            <person name="Chen R."/>
            <person name="Durbin K.J."/>
            <person name="Egan A."/>
            <person name="Ren Y."/>
            <person name="Song X.-Z."/>
            <person name="Li B."/>
            <person name="Liu Y."/>
            <person name="Qin X."/>
            <person name="Cawley S."/>
            <person name="Cooney A.J."/>
            <person name="D'Souza L.M."/>
            <person name="Martin K."/>
            <person name="Wu J.Q."/>
            <person name="Gonzalez-Garay M.L."/>
            <person name="Jackson A.R."/>
            <person name="Kalafus K.J."/>
            <person name="McLeod M.P."/>
            <person name="Milosavljevic A."/>
            <person name="Virk D."/>
            <person name="Volkov A."/>
            <person name="Wheeler D.A."/>
            <person name="Zhang Z."/>
            <person name="Bailey J.A."/>
            <person name="Eichler E.E."/>
            <person name="Tuzun E."/>
            <person name="Birney E."/>
            <person name="Mongin E."/>
            <person name="Ureta-Vidal A."/>
            <person name="Woodwark C."/>
            <person name="Zdobnov E."/>
            <person name="Bork P."/>
            <person name="Suyama M."/>
            <person name="Torrents D."/>
            <person name="Alexandersson M."/>
            <person name="Trask B.J."/>
            <person name="Young J.M."/>
            <person name="Huang H."/>
            <person name="Wang H."/>
            <person name="Xing H."/>
            <person name="Daniels S."/>
            <person name="Gietzen D."/>
            <person name="Schmidt J."/>
            <person name="Stevens K."/>
            <person name="Vitt U."/>
            <person name="Wingrove J."/>
            <person name="Camara F."/>
            <person name="Mar Alba M."/>
            <person name="Abril J.F."/>
            <person name="Guigo R."/>
            <person name="Smit A."/>
            <person name="Dubchak I."/>
            <person name="Rubin E.M."/>
            <person name="Couronne O."/>
            <person name="Poliakov A."/>
            <person name="Huebner N."/>
            <person name="Ganten D."/>
            <person name="Goesele C."/>
            <person name="Hummel O."/>
            <person name="Kreitler T."/>
            <person name="Lee Y.-A."/>
            <person name="Monti J."/>
            <person name="Schulz H."/>
            <person name="Zimdahl H."/>
            <person name="Himmelbauer H."/>
            <person name="Lehrach H."/>
            <person name="Jacob H.J."/>
            <person name="Bromberg S."/>
            <person name="Gullings-Handley J."/>
            <person name="Jensen-Seaman M.I."/>
            <person name="Kwitek A.E."/>
            <person name="Lazar J."/>
            <person name="Pasko D."/>
            <person name="Tonellato P.J."/>
            <person name="Twigger S."/>
            <person name="Ponting C.P."/>
            <person name="Duarte J.M."/>
            <person name="Rice S."/>
            <person name="Goodstadt L."/>
            <person name="Beatson S.A."/>
            <person name="Emes R.D."/>
            <person name="Winter E.E."/>
            <person name="Webber C."/>
            <person name="Brandt P."/>
            <person name="Nyakatura G."/>
            <person name="Adetobi M."/>
            <person name="Chiaromonte F."/>
            <person name="Elnitski L."/>
            <person name="Eswara P."/>
            <person name="Hardison R.C."/>
            <person name="Hou M."/>
            <person name="Kolbe D."/>
            <person name="Makova K."/>
            <person name="Miller W."/>
            <person name="Nekrutenko A."/>
            <person name="Riemer C."/>
            <person name="Schwartz S."/>
            <person name="Taylor J."/>
            <person name="Yang S."/>
            <person name="Zhang Y."/>
            <person name="Lindpaintner K."/>
            <person name="Andrews T.D."/>
            <person name="Caccamo M."/>
            <person name="Clamp M."/>
            <person name="Clarke L."/>
            <person name="Curwen V."/>
            <person name="Durbin R.M."/>
            <person name="Eyras E."/>
            <person name="Searle S.M."/>
            <person name="Cooper G.M."/>
            <person name="Batzoglou S."/>
            <person name="Brudno M."/>
            <person name="Sidow A."/>
            <person name="Stone E.A."/>
            <person name="Payseur B.A."/>
            <person name="Bourque G."/>
            <person name="Lopez-Otin C."/>
            <person name="Puente X.S."/>
            <person name="Chakrabarti K."/>
            <person name="Chatterji S."/>
            <person name="Dewey C."/>
            <person name="Pachter L."/>
            <person name="Bray N."/>
            <person name="Yap V.B."/>
            <person name="Caspi A."/>
            <person name="Tesler G."/>
            <person name="Pevzner P.A."/>
            <person name="Haussler D."/>
            <person name="Roskin K.M."/>
            <person name="Baertsch R."/>
            <person name="Clawson H."/>
            <person name="Furey T.S."/>
            <person name="Hinrichs A.S."/>
            <person name="Karolchik D."/>
            <person name="Kent W.J."/>
            <person name="Rosenbloom K.R."/>
            <person name="Trumbower H."/>
            <person name="Weirauch M."/>
            <person name="Cooper D.N."/>
            <person name="Stenson P.D."/>
            <person name="Ma B."/>
            <person name="Brent M."/>
            <person name="Arumugam M."/>
            <person name="Shteynberg D."/>
            <person name="Copley R.R."/>
            <person name="Taylor M.S."/>
            <person name="Riethman H."/>
            <person name="Mudunuri U."/>
            <person name="Peterson J."/>
            <person name="Guyer M."/>
            <person name="Felsenfeld A."/>
            <person name="Old S."/>
            <person name="Mockrin S."/>
            <person name="Collins F.S."/>
        </authorList>
    </citation>
    <scope>NUCLEOTIDE SEQUENCE [LARGE SCALE GENOMIC DNA]</scope>
    <source>
        <strain>Brown Norway</strain>
    </source>
</reference>
<dbReference type="EMBL" id="AC121965">
    <property type="status" value="NOT_ANNOTATED_CDS"/>
    <property type="molecule type" value="Genomic_DNA"/>
</dbReference>
<dbReference type="RefSeq" id="NP_001389475.1">
    <property type="nucleotide sequence ID" value="NM_001402546.1"/>
</dbReference>
<dbReference type="RefSeq" id="XP_056841535.1">
    <property type="nucleotide sequence ID" value="XM_056985555.2"/>
</dbReference>
<dbReference type="SMR" id="P0DN35"/>
<dbReference type="FunCoup" id="P0DN35">
    <property type="interactions" value="218"/>
</dbReference>
<dbReference type="PhosphoSitePlus" id="P0DN35"/>
<dbReference type="jPOST" id="P0DN35"/>
<dbReference type="GeneID" id="100912357"/>
<dbReference type="AGR" id="RGD:6487218"/>
<dbReference type="RGD" id="6487218">
    <property type="gene designation" value="Ndufb1"/>
</dbReference>
<dbReference type="InParanoid" id="P0DN35"/>
<dbReference type="PRO" id="PR:P0DN35"/>
<dbReference type="Proteomes" id="UP000002494">
    <property type="component" value="Unplaced"/>
</dbReference>
<dbReference type="GO" id="GO:0005743">
    <property type="term" value="C:mitochondrial inner membrane"/>
    <property type="evidence" value="ECO:0000266"/>
    <property type="project" value="RGD"/>
</dbReference>
<dbReference type="GO" id="GO:0016607">
    <property type="term" value="C:nuclear speck"/>
    <property type="evidence" value="ECO:0007669"/>
    <property type="project" value="Ensembl"/>
</dbReference>
<dbReference type="GO" id="GO:0045271">
    <property type="term" value="C:respiratory chain complex I"/>
    <property type="evidence" value="ECO:0000250"/>
    <property type="project" value="UniProtKB"/>
</dbReference>
<dbReference type="InterPro" id="IPR012575">
    <property type="entry name" value="NDUB1"/>
</dbReference>
<dbReference type="PANTHER" id="PTHR15222">
    <property type="entry name" value="NADH DEHYDROGENASE [UBIQUINONE] 1 BETA SUBCOMPLEX SUBUNIT 1"/>
    <property type="match status" value="1"/>
</dbReference>
<dbReference type="PANTHER" id="PTHR15222:SF2">
    <property type="entry name" value="NADH DEHYDROGENASE [UBIQUINONE] 1 BETA SUBCOMPLEX SUBUNIT 1"/>
    <property type="match status" value="1"/>
</dbReference>
<dbReference type="Pfam" id="PF08040">
    <property type="entry name" value="NADH_oxidored"/>
    <property type="match status" value="1"/>
</dbReference>